<comment type="catalytic activity">
    <reaction evidence="1">
        <text>tRNA(Phe) + L-phenylalanine + ATP = L-phenylalanyl-tRNA(Phe) + AMP + diphosphate + H(+)</text>
        <dbReference type="Rhea" id="RHEA:19413"/>
        <dbReference type="Rhea" id="RHEA-COMP:9668"/>
        <dbReference type="Rhea" id="RHEA-COMP:9699"/>
        <dbReference type="ChEBI" id="CHEBI:15378"/>
        <dbReference type="ChEBI" id="CHEBI:30616"/>
        <dbReference type="ChEBI" id="CHEBI:33019"/>
        <dbReference type="ChEBI" id="CHEBI:58095"/>
        <dbReference type="ChEBI" id="CHEBI:78442"/>
        <dbReference type="ChEBI" id="CHEBI:78531"/>
        <dbReference type="ChEBI" id="CHEBI:456215"/>
        <dbReference type="EC" id="6.1.1.20"/>
    </reaction>
</comment>
<comment type="cofactor">
    <cofactor evidence="1">
        <name>Mg(2+)</name>
        <dbReference type="ChEBI" id="CHEBI:18420"/>
    </cofactor>
    <text evidence="1">Binds 2 magnesium ions per tetramer.</text>
</comment>
<comment type="subunit">
    <text evidence="1">Tetramer of two alpha and two beta subunits.</text>
</comment>
<comment type="subcellular location">
    <subcellularLocation>
        <location evidence="1">Cytoplasm</location>
    </subcellularLocation>
</comment>
<comment type="similarity">
    <text evidence="1">Belongs to the class-II aminoacyl-tRNA synthetase family. Phe-tRNA synthetase alpha subunit type 1 subfamily.</text>
</comment>
<gene>
    <name evidence="1" type="primary">pheS</name>
    <name type="ordered locus">llmg_2196</name>
</gene>
<protein>
    <recommendedName>
        <fullName evidence="1">Phenylalanine--tRNA ligase alpha subunit</fullName>
        <ecNumber evidence="1">6.1.1.20</ecNumber>
    </recommendedName>
    <alternativeName>
        <fullName evidence="1">Phenylalanyl-tRNA synthetase alpha subunit</fullName>
        <shortName evidence="1">PheRS</shortName>
    </alternativeName>
</protein>
<dbReference type="EC" id="6.1.1.20" evidence="1"/>
<dbReference type="EMBL" id="AM406671">
    <property type="protein sequence ID" value="CAL98763.1"/>
    <property type="molecule type" value="Genomic_DNA"/>
</dbReference>
<dbReference type="RefSeq" id="WP_011835889.1">
    <property type="nucleotide sequence ID" value="NC_009004.1"/>
</dbReference>
<dbReference type="SMR" id="A2RN75"/>
<dbReference type="STRING" id="416870.llmg_2196"/>
<dbReference type="GeneID" id="61110274"/>
<dbReference type="KEGG" id="llm:llmg_2196"/>
<dbReference type="eggNOG" id="COG0016">
    <property type="taxonomic scope" value="Bacteria"/>
</dbReference>
<dbReference type="HOGENOM" id="CLU_025086_0_1_9"/>
<dbReference type="OrthoDB" id="9800719at2"/>
<dbReference type="PhylomeDB" id="A2RN75"/>
<dbReference type="Proteomes" id="UP000000364">
    <property type="component" value="Chromosome"/>
</dbReference>
<dbReference type="GO" id="GO:0005737">
    <property type="term" value="C:cytoplasm"/>
    <property type="evidence" value="ECO:0007669"/>
    <property type="project" value="UniProtKB-SubCell"/>
</dbReference>
<dbReference type="GO" id="GO:0005524">
    <property type="term" value="F:ATP binding"/>
    <property type="evidence" value="ECO:0007669"/>
    <property type="project" value="UniProtKB-UniRule"/>
</dbReference>
<dbReference type="GO" id="GO:0140096">
    <property type="term" value="F:catalytic activity, acting on a protein"/>
    <property type="evidence" value="ECO:0007669"/>
    <property type="project" value="UniProtKB-ARBA"/>
</dbReference>
<dbReference type="GO" id="GO:0000287">
    <property type="term" value="F:magnesium ion binding"/>
    <property type="evidence" value="ECO:0007669"/>
    <property type="project" value="UniProtKB-UniRule"/>
</dbReference>
<dbReference type="GO" id="GO:0004826">
    <property type="term" value="F:phenylalanine-tRNA ligase activity"/>
    <property type="evidence" value="ECO:0007669"/>
    <property type="project" value="UniProtKB-UniRule"/>
</dbReference>
<dbReference type="GO" id="GO:0016740">
    <property type="term" value="F:transferase activity"/>
    <property type="evidence" value="ECO:0007669"/>
    <property type="project" value="UniProtKB-ARBA"/>
</dbReference>
<dbReference type="GO" id="GO:0000049">
    <property type="term" value="F:tRNA binding"/>
    <property type="evidence" value="ECO:0007669"/>
    <property type="project" value="InterPro"/>
</dbReference>
<dbReference type="GO" id="GO:0006432">
    <property type="term" value="P:phenylalanyl-tRNA aminoacylation"/>
    <property type="evidence" value="ECO:0007669"/>
    <property type="project" value="UniProtKB-UniRule"/>
</dbReference>
<dbReference type="CDD" id="cd00496">
    <property type="entry name" value="PheRS_alpha_core"/>
    <property type="match status" value="1"/>
</dbReference>
<dbReference type="FunFam" id="3.30.930.10:FF:000003">
    <property type="entry name" value="Phenylalanine--tRNA ligase alpha subunit"/>
    <property type="match status" value="1"/>
</dbReference>
<dbReference type="Gene3D" id="3.30.930.10">
    <property type="entry name" value="Bira Bifunctional Protein, Domain 2"/>
    <property type="match status" value="1"/>
</dbReference>
<dbReference type="HAMAP" id="MF_00281">
    <property type="entry name" value="Phe_tRNA_synth_alpha1"/>
    <property type="match status" value="1"/>
</dbReference>
<dbReference type="InterPro" id="IPR006195">
    <property type="entry name" value="aa-tRNA-synth_II"/>
</dbReference>
<dbReference type="InterPro" id="IPR045864">
    <property type="entry name" value="aa-tRNA-synth_II/BPL/LPL"/>
</dbReference>
<dbReference type="InterPro" id="IPR004529">
    <property type="entry name" value="Phe-tRNA-synth_IIc_asu"/>
</dbReference>
<dbReference type="InterPro" id="IPR004188">
    <property type="entry name" value="Phe-tRNA_ligase_II_N"/>
</dbReference>
<dbReference type="InterPro" id="IPR022911">
    <property type="entry name" value="Phe_tRNA_ligase_alpha1_bac"/>
</dbReference>
<dbReference type="InterPro" id="IPR002319">
    <property type="entry name" value="Phenylalanyl-tRNA_Synthase"/>
</dbReference>
<dbReference type="InterPro" id="IPR010978">
    <property type="entry name" value="tRNA-bd_arm"/>
</dbReference>
<dbReference type="NCBIfam" id="TIGR00468">
    <property type="entry name" value="pheS"/>
    <property type="match status" value="1"/>
</dbReference>
<dbReference type="PANTHER" id="PTHR11538:SF41">
    <property type="entry name" value="PHENYLALANINE--TRNA LIGASE, MITOCHONDRIAL"/>
    <property type="match status" value="1"/>
</dbReference>
<dbReference type="PANTHER" id="PTHR11538">
    <property type="entry name" value="PHENYLALANYL-TRNA SYNTHETASE"/>
    <property type="match status" value="1"/>
</dbReference>
<dbReference type="Pfam" id="PF02912">
    <property type="entry name" value="Phe_tRNA-synt_N"/>
    <property type="match status" value="1"/>
</dbReference>
<dbReference type="Pfam" id="PF01409">
    <property type="entry name" value="tRNA-synt_2d"/>
    <property type="match status" value="1"/>
</dbReference>
<dbReference type="SUPFAM" id="SSF55681">
    <property type="entry name" value="Class II aaRS and biotin synthetases"/>
    <property type="match status" value="1"/>
</dbReference>
<dbReference type="SUPFAM" id="SSF46589">
    <property type="entry name" value="tRNA-binding arm"/>
    <property type="match status" value="1"/>
</dbReference>
<dbReference type="PROSITE" id="PS50862">
    <property type="entry name" value="AA_TRNA_LIGASE_II"/>
    <property type="match status" value="1"/>
</dbReference>
<keyword id="KW-0030">Aminoacyl-tRNA synthetase</keyword>
<keyword id="KW-0067">ATP-binding</keyword>
<keyword id="KW-0963">Cytoplasm</keyword>
<keyword id="KW-0436">Ligase</keyword>
<keyword id="KW-0460">Magnesium</keyword>
<keyword id="KW-0479">Metal-binding</keyword>
<keyword id="KW-0547">Nucleotide-binding</keyword>
<keyword id="KW-0648">Protein biosynthesis</keyword>
<proteinExistence type="inferred from homology"/>
<sequence length="345" mass="39231">MNLQEKIEDLRKRTLSDLLSVADEKTLNNLRTVMLGKKGELTEILKGMKDLTNEERPVIGALANAFRDEFGAKFEAKKLEIEQAVMNAALESETLDVTLPGKAQKKGSRHILTQTQEEIEEIFLGMGYEIVDGYEVETDHYNFERMNLPKDHPARDMQDTFYITNEVLLRTHTSPMQARTMDAHDFSKGGLRMIAPGRVYRRDTDDATHSHQFHQIEGLVVDKNITMADLKGTLDLVMKKMFGQERELRWRPSYFPFTEPSVEVDISCFKCGGKGCNVCKHTGWIEILGAGMVHPNVLEMSGLDSSVYSGFAFGLGQERIAMLRYGINDIRGFYQGDVRFLEQFD</sequence>
<accession>A2RN75</accession>
<name>SYFA_LACLM</name>
<feature type="chain" id="PRO_1000006850" description="Phenylalanine--tRNA ligase alpha subunit">
    <location>
        <begin position="1"/>
        <end position="345"/>
    </location>
</feature>
<feature type="binding site" evidence="1">
    <location>
        <position position="259"/>
    </location>
    <ligand>
        <name>Mg(2+)</name>
        <dbReference type="ChEBI" id="CHEBI:18420"/>
        <note>shared with beta subunit</note>
    </ligand>
</feature>
<evidence type="ECO:0000255" key="1">
    <source>
        <dbReference type="HAMAP-Rule" id="MF_00281"/>
    </source>
</evidence>
<organism>
    <name type="scientific">Lactococcus lactis subsp. cremoris (strain MG1363)</name>
    <dbReference type="NCBI Taxonomy" id="416870"/>
    <lineage>
        <taxon>Bacteria</taxon>
        <taxon>Bacillati</taxon>
        <taxon>Bacillota</taxon>
        <taxon>Bacilli</taxon>
        <taxon>Lactobacillales</taxon>
        <taxon>Streptococcaceae</taxon>
        <taxon>Lactococcus</taxon>
        <taxon>Lactococcus cremoris subsp. cremoris</taxon>
    </lineage>
</organism>
<reference key="1">
    <citation type="journal article" date="2007" name="J. Bacteriol.">
        <title>The complete genome sequence of the lactic acid bacterial paradigm Lactococcus lactis subsp. cremoris MG1363.</title>
        <authorList>
            <person name="Wegmann U."/>
            <person name="O'Connell-Motherway M."/>
            <person name="Zomer A."/>
            <person name="Buist G."/>
            <person name="Shearman C."/>
            <person name="Canchaya C."/>
            <person name="Ventura M."/>
            <person name="Goesmann A."/>
            <person name="Gasson M.J."/>
            <person name="Kuipers O.P."/>
            <person name="van Sinderen D."/>
            <person name="Kok J."/>
        </authorList>
    </citation>
    <scope>NUCLEOTIDE SEQUENCE [LARGE SCALE GENOMIC DNA]</scope>
    <source>
        <strain>MG1363</strain>
    </source>
</reference>